<comment type="function">
    <text evidence="3 4">In vitro binds long double-stranded RNA (dsRNA) (500 and 700 base pairs), but not dsRNA shorter than 300 bp (PubMed:26067272). Not involved in RNA autophagy, a process in which RNA is directly imported into lysosomes in an ATP-dependent manner, and degraded (PubMed:27046251).</text>
</comment>
<comment type="subcellular location">
    <subcellularLocation>
        <location evidence="6">Membrane</location>
        <topology evidence="6">Multi-pass membrane protein</topology>
    </subcellularLocation>
</comment>
<comment type="alternative products">
    <event type="alternative splicing"/>
    <isoform>
        <id>Q6AXF6-1</id>
        <name>1</name>
        <sequence type="displayed"/>
    </isoform>
    <isoform>
        <id>Q6AXF6-2</id>
        <name>2</name>
        <sequence type="described" ref="VSP_013522"/>
    </isoform>
</comment>
<comment type="similarity">
    <text evidence="6">Belongs to the SID1 family.</text>
</comment>
<organism>
    <name type="scientific">Mus musculus</name>
    <name type="common">Mouse</name>
    <dbReference type="NCBI Taxonomy" id="10090"/>
    <lineage>
        <taxon>Eukaryota</taxon>
        <taxon>Metazoa</taxon>
        <taxon>Chordata</taxon>
        <taxon>Craniata</taxon>
        <taxon>Vertebrata</taxon>
        <taxon>Euteleostomi</taxon>
        <taxon>Mammalia</taxon>
        <taxon>Eutheria</taxon>
        <taxon>Euarchontoglires</taxon>
        <taxon>Glires</taxon>
        <taxon>Rodentia</taxon>
        <taxon>Myomorpha</taxon>
        <taxon>Muroidea</taxon>
        <taxon>Muridae</taxon>
        <taxon>Murinae</taxon>
        <taxon>Mus</taxon>
        <taxon>Mus</taxon>
    </lineage>
</organism>
<protein>
    <recommendedName>
        <fullName>SID1 transmembrane family member 1</fullName>
    </recommendedName>
</protein>
<accession>Q6AXF6</accession>
<accession>Q8R397</accession>
<reference key="1">
    <citation type="journal article" date="2004" name="Genome Res.">
        <title>The status, quality, and expansion of the NIH full-length cDNA project: the Mammalian Gene Collection (MGC).</title>
        <authorList>
            <consortium name="The MGC Project Team"/>
        </authorList>
    </citation>
    <scope>NUCLEOTIDE SEQUENCE [LARGE SCALE MRNA] (ISOFORMS 1 AND 2)</scope>
    <source>
        <strain>C57BL/6J</strain>
        <tissue>Brain</tissue>
        <tissue>Mammary gland</tissue>
    </source>
</reference>
<reference key="2">
    <citation type="journal article" date="2010" name="Cell">
        <title>A tissue-specific atlas of mouse protein phosphorylation and expression.</title>
        <authorList>
            <person name="Huttlin E.L."/>
            <person name="Jedrychowski M.P."/>
            <person name="Elias J.E."/>
            <person name="Goswami T."/>
            <person name="Rad R."/>
            <person name="Beausoleil S.A."/>
            <person name="Villen J."/>
            <person name="Haas W."/>
            <person name="Sowa M.E."/>
            <person name="Gygi S.P."/>
        </authorList>
    </citation>
    <scope>IDENTIFICATION BY MASS SPECTROMETRY [LARGE SCALE ANALYSIS]</scope>
    <source>
        <tissue>Brain</tissue>
    </source>
</reference>
<reference key="3">
    <citation type="journal article" date="2015" name="J. Biol. Chem.">
        <title>Systemic RNA interference deficiency-1 (SID-1) extracellular domain selectively binds long double-stranded RNA and is required for RNA transport by SID-1.</title>
        <authorList>
            <person name="Li W."/>
            <person name="Koutmou K.S."/>
            <person name="Leahy D.J."/>
            <person name="Li M."/>
        </authorList>
    </citation>
    <scope>FUNCTION</scope>
    <scope>MUTAGENESIS OF PHE-169 AND PRO-186</scope>
</reference>
<reference key="4">
    <citation type="journal article" date="2016" name="Autophagy">
        <title>Lysosomal putative RNA transporter SIDT2 mediates direct uptake of RNA by lysosomes.</title>
        <authorList>
            <person name="Aizawa S."/>
            <person name="Fujiwara Y."/>
            <person name="Contu V.R."/>
            <person name="Hase K."/>
            <person name="Takahashi M."/>
            <person name="Kikuchi H."/>
            <person name="Kabuta C."/>
            <person name="Wada K."/>
            <person name="Kabuta T."/>
        </authorList>
    </citation>
    <scope>FUNCTION</scope>
</reference>
<gene>
    <name type="primary">Sidt1</name>
</gene>
<proteinExistence type="evidence at protein level"/>
<feature type="signal peptide" evidence="1">
    <location>
        <begin position="1"/>
        <end position="19"/>
    </location>
</feature>
<feature type="chain" id="PRO_0000032576" description="SID1 transmembrane family member 1">
    <location>
        <begin position="20"/>
        <end position="827"/>
    </location>
</feature>
<feature type="topological domain" description="Extracellular" evidence="1">
    <location>
        <begin position="20"/>
        <end position="309"/>
    </location>
</feature>
<feature type="transmembrane region" description="Helical" evidence="1">
    <location>
        <begin position="310"/>
        <end position="330"/>
    </location>
</feature>
<feature type="topological domain" description="Cytoplasmic" evidence="1">
    <location>
        <begin position="331"/>
        <end position="442"/>
    </location>
</feature>
<feature type="transmembrane region" description="Helical" evidence="1">
    <location>
        <begin position="443"/>
        <end position="463"/>
    </location>
</feature>
<feature type="topological domain" description="Extracellular" evidence="1">
    <location>
        <begin position="464"/>
        <end position="494"/>
    </location>
</feature>
<feature type="transmembrane region" description="Helical" evidence="1">
    <location>
        <begin position="495"/>
        <end position="515"/>
    </location>
</feature>
<feature type="topological domain" description="Cytoplasmic" evidence="1">
    <location>
        <begin position="516"/>
        <end position="541"/>
    </location>
</feature>
<feature type="transmembrane region" description="Helical" evidence="1">
    <location>
        <begin position="542"/>
        <end position="562"/>
    </location>
</feature>
<feature type="topological domain" description="Extracellular" evidence="1">
    <location>
        <begin position="563"/>
        <end position="572"/>
    </location>
</feature>
<feature type="transmembrane region" description="Helical" evidence="1">
    <location>
        <begin position="573"/>
        <end position="590"/>
    </location>
</feature>
<feature type="topological domain" description="Cytoplasmic" evidence="1">
    <location>
        <begin position="591"/>
        <end position="600"/>
    </location>
</feature>
<feature type="transmembrane region" description="Helical" evidence="1">
    <location>
        <begin position="601"/>
        <end position="621"/>
    </location>
</feature>
<feature type="topological domain" description="Extracellular" evidence="1">
    <location>
        <begin position="622"/>
        <end position="626"/>
    </location>
</feature>
<feature type="transmembrane region" description="Helical" evidence="1">
    <location>
        <begin position="627"/>
        <end position="647"/>
    </location>
</feature>
<feature type="topological domain" description="Cytoplasmic" evidence="1">
    <location>
        <begin position="648"/>
        <end position="683"/>
    </location>
</feature>
<feature type="transmembrane region" description="Helical" evidence="1">
    <location>
        <begin position="684"/>
        <end position="704"/>
    </location>
</feature>
<feature type="topological domain" description="Extracellular" evidence="1">
    <location>
        <begin position="705"/>
        <end position="710"/>
    </location>
</feature>
<feature type="transmembrane region" description="Helical" evidence="1">
    <location>
        <begin position="711"/>
        <end position="731"/>
    </location>
</feature>
<feature type="topological domain" description="Cytoplasmic" evidence="1">
    <location>
        <begin position="732"/>
        <end position="741"/>
    </location>
</feature>
<feature type="transmembrane region" description="Helical" evidence="1">
    <location>
        <begin position="742"/>
        <end position="762"/>
    </location>
</feature>
<feature type="topological domain" description="Extracellular" evidence="1">
    <location>
        <begin position="763"/>
        <end position="791"/>
    </location>
</feature>
<feature type="transmembrane region" description="Helical" evidence="1">
    <location>
        <begin position="792"/>
        <end position="812"/>
    </location>
</feature>
<feature type="topological domain" description="Cytoplasmic" evidence="1">
    <location>
        <begin position="813"/>
        <end position="827"/>
    </location>
</feature>
<feature type="region of interest" description="Disordered" evidence="2">
    <location>
        <begin position="344"/>
        <end position="409"/>
    </location>
</feature>
<feature type="compositionally biased region" description="Low complexity" evidence="2">
    <location>
        <begin position="375"/>
        <end position="386"/>
    </location>
</feature>
<feature type="compositionally biased region" description="Acidic residues" evidence="2">
    <location>
        <begin position="398"/>
        <end position="409"/>
    </location>
</feature>
<feature type="glycosylation site" description="N-linked (GlcNAc...) asparagine" evidence="1">
    <location>
        <position position="67"/>
    </location>
</feature>
<feature type="glycosylation site" description="N-linked (GlcNAc...) asparagine" evidence="1">
    <location>
        <position position="83"/>
    </location>
</feature>
<feature type="glycosylation site" description="N-linked (GlcNAc...) asparagine" evidence="1">
    <location>
        <position position="136"/>
    </location>
</feature>
<feature type="glycosylation site" description="N-linked (GlcNAc...) asparagine" evidence="1">
    <location>
        <position position="282"/>
    </location>
</feature>
<feature type="glycosylation site" description="N-linked (GlcNAc...) asparagine" evidence="1">
    <location>
        <position position="471"/>
    </location>
</feature>
<feature type="glycosylation site" description="N-linked (GlcNAc...) asparagine" evidence="1">
    <location>
        <position position="567"/>
    </location>
</feature>
<feature type="glycosylation site" description="N-linked (GlcNAc...) asparagine" evidence="1">
    <location>
        <position position="764"/>
    </location>
</feature>
<feature type="splice variant" id="VSP_013522" description="In isoform 2." evidence="5">
    <location>
        <begin position="1"/>
        <end position="382"/>
    </location>
</feature>
<feature type="mutagenesis site" description="Decreased affinity for 700-bp RNA." evidence="3">
    <original>F</original>
    <variation>T</variation>
    <location>
        <position position="169"/>
    </location>
</feature>
<feature type="mutagenesis site" description="Decreased affinity for 700-bp RNA." evidence="3">
    <original>P</original>
    <variation>L</variation>
    <location>
        <position position="186"/>
    </location>
</feature>
<sequence length="827" mass="93896">MLDCLRLALLCALPWLLRAAVPGHQEEPLAKSAELRRDPRDPARGADFDRVYSGVVSLSTENIYSFNHTSHPGQVTAVRVHVNSSSDNLDYPVLVVVRQQKEVLSWQVPLLFQGLYQRSYNYQEVSRTLCPSKATNETGPLEQLIFVDVASMAPHGAHYKLLVTKIKHFQLPTNVAFYFTASPSQPQYFLYKFPEDVDSVIIKVVSEKAYPCSVVSVQNIMCPVYDLDHNVEFNGVYQSMTKKAAITLQKKDFPDEQFFVVFVIKPEDYACGGSFSIQENENQTWNLQRSKNLKVTIVPSIKESVYVKSSLFSIFVFLSFYLGCLLVVLVHHVRFQRKSIDGSFGSSDGSGNMAVSHPITASTPEGSNYGAIDESSSSPGRQMSSSDGGQPCHSDTDSSVEESDFDTMPDIESDKNVIRTKMFLYLSDLSRKDRRIVSKKYKIYFWNIITIAVFYALPVMQLVITYQTVVNVTGNQDICYYNFLCAHPLGVLSAFNNILSNLGHVLLGFLFLLIVLRRDLLHRRALEAKDIFAMEYGIPKHFGLFYAMGIALMMEGVLSACYHVCPNYSNFQFDTSFMYMIAGLCMLKLYQTRHPDINASAYSAYASFAVVITLTVLGVVFGKNDVWFWIIFSAIHILSSLALSTQIYYMGRFKIDLGIFRRAAMVFYTDCIQQCSRPLYMDRMVLLIVGNLVNWSFAFFGLIYRPRDFASYMLGIFICNLLLYLAFYIIMKLRSSEKVLPLPVFCIAATAVVWAAALYFFFQNLSSWEGTPAESREKNRECVLLDFFDDHDIWHFLSATALFFSFLVLLTLDDDLDVVRRDQIPVF</sequence>
<evidence type="ECO:0000255" key="1"/>
<evidence type="ECO:0000256" key="2">
    <source>
        <dbReference type="SAM" id="MobiDB-lite"/>
    </source>
</evidence>
<evidence type="ECO:0000269" key="3">
    <source>
    </source>
</evidence>
<evidence type="ECO:0000269" key="4">
    <source>
    </source>
</evidence>
<evidence type="ECO:0000303" key="5">
    <source>
    </source>
</evidence>
<evidence type="ECO:0000305" key="6"/>
<name>SIDT1_MOUSE</name>
<dbReference type="EMBL" id="BC025888">
    <property type="protein sequence ID" value="AAH25888.1"/>
    <property type="molecule type" value="mRNA"/>
</dbReference>
<dbReference type="EMBL" id="BC079584">
    <property type="protein sequence ID" value="AAH79584.1"/>
    <property type="molecule type" value="mRNA"/>
</dbReference>
<dbReference type="CCDS" id="CCDS28185.1">
    <molecule id="Q6AXF6-1"/>
</dbReference>
<dbReference type="RefSeq" id="NP_001152891.1">
    <property type="nucleotide sequence ID" value="NM_001159419.1"/>
</dbReference>
<dbReference type="RefSeq" id="NP_932151.2">
    <molecule id="Q6AXF6-1"/>
    <property type="nucleotide sequence ID" value="NM_198034.3"/>
</dbReference>
<dbReference type="SMR" id="Q6AXF6"/>
<dbReference type="BioGRID" id="235690">
    <property type="interactions" value="1"/>
</dbReference>
<dbReference type="FunCoup" id="Q6AXF6">
    <property type="interactions" value="175"/>
</dbReference>
<dbReference type="STRING" id="10090.ENSMUSP00000038433"/>
<dbReference type="GlyConnect" id="2711">
    <property type="glycosylation" value="5 N-Linked glycans (2 sites)"/>
</dbReference>
<dbReference type="GlyCosmos" id="Q6AXF6">
    <property type="glycosylation" value="7 sites, 5 glycans"/>
</dbReference>
<dbReference type="GlyGen" id="Q6AXF6">
    <property type="glycosylation" value="7 sites, 9 N-linked glycans (4 sites)"/>
</dbReference>
<dbReference type="iPTMnet" id="Q6AXF6"/>
<dbReference type="PhosphoSitePlus" id="Q6AXF6"/>
<dbReference type="PaxDb" id="10090-ENSMUSP00000038433"/>
<dbReference type="ProteomicsDB" id="261400">
    <molecule id="Q6AXF6-1"/>
</dbReference>
<dbReference type="ProteomicsDB" id="261401">
    <molecule id="Q6AXF6-2"/>
</dbReference>
<dbReference type="Antibodypedia" id="32584">
    <property type="antibodies" value="154 antibodies from 27 providers"/>
</dbReference>
<dbReference type="DNASU" id="320007"/>
<dbReference type="Ensembl" id="ENSMUST00000136381.8">
    <molecule id="Q6AXF6-1"/>
    <property type="protein sequence ID" value="ENSMUSP00000115372.2"/>
    <property type="gene ID" value="ENSMUSG00000022696.18"/>
</dbReference>
<dbReference type="GeneID" id="320007"/>
<dbReference type="KEGG" id="mmu:320007"/>
<dbReference type="UCSC" id="uc007zhd.1">
    <molecule id="Q6AXF6-1"/>
    <property type="organism name" value="mouse"/>
</dbReference>
<dbReference type="AGR" id="MGI:2443155"/>
<dbReference type="CTD" id="54847"/>
<dbReference type="MGI" id="MGI:2443155">
    <property type="gene designation" value="Sidt1"/>
</dbReference>
<dbReference type="VEuPathDB" id="HostDB:ENSMUSG00000022696"/>
<dbReference type="eggNOG" id="ENOG502QUXZ">
    <property type="taxonomic scope" value="Eukaryota"/>
</dbReference>
<dbReference type="GeneTree" id="ENSGT00390000010091"/>
<dbReference type="HOGENOM" id="CLU_059625_0_0_1"/>
<dbReference type="InParanoid" id="Q6AXF6"/>
<dbReference type="OMA" id="SDTDMGI"/>
<dbReference type="OrthoDB" id="416618at2759"/>
<dbReference type="BioGRID-ORCS" id="320007">
    <property type="hits" value="2 hits in 75 CRISPR screens"/>
</dbReference>
<dbReference type="ChiTaRS" id="Sidt1">
    <property type="organism name" value="mouse"/>
</dbReference>
<dbReference type="PRO" id="PR:Q6AXF6"/>
<dbReference type="Proteomes" id="UP000000589">
    <property type="component" value="Chromosome 16"/>
</dbReference>
<dbReference type="RNAct" id="Q6AXF6">
    <property type="molecule type" value="protein"/>
</dbReference>
<dbReference type="Bgee" id="ENSMUSG00000022696">
    <property type="expression patterns" value="Expressed in primary visual cortex and 87 other cell types or tissues"/>
</dbReference>
<dbReference type="ExpressionAtlas" id="Q6AXF6">
    <property type="expression patterns" value="baseline and differential"/>
</dbReference>
<dbReference type="GO" id="GO:0016020">
    <property type="term" value="C:membrane"/>
    <property type="evidence" value="ECO:0007669"/>
    <property type="project" value="UniProtKB-SubCell"/>
</dbReference>
<dbReference type="GO" id="GO:0003725">
    <property type="term" value="F:double-stranded RNA binding"/>
    <property type="evidence" value="ECO:0000314"/>
    <property type="project" value="WormBase"/>
</dbReference>
<dbReference type="InterPro" id="IPR025958">
    <property type="entry name" value="SID1_TM_fam"/>
</dbReference>
<dbReference type="PANTHER" id="PTHR12185:SF15">
    <property type="entry name" value="SID1 TRANSMEMBRANE FAMILY MEMBER 1"/>
    <property type="match status" value="1"/>
</dbReference>
<dbReference type="PANTHER" id="PTHR12185">
    <property type="entry name" value="SID1 TRANSMEMBRANE FAMILY MEMEBER"/>
    <property type="match status" value="1"/>
</dbReference>
<dbReference type="Pfam" id="PF13965">
    <property type="entry name" value="SID-1_RNA_chan"/>
    <property type="match status" value="1"/>
</dbReference>
<keyword id="KW-0025">Alternative splicing</keyword>
<keyword id="KW-0325">Glycoprotein</keyword>
<keyword id="KW-0472">Membrane</keyword>
<keyword id="KW-1185">Reference proteome</keyword>
<keyword id="KW-0694">RNA-binding</keyword>
<keyword id="KW-0732">Signal</keyword>
<keyword id="KW-0812">Transmembrane</keyword>
<keyword id="KW-1133">Transmembrane helix</keyword>